<accession>Q08383</accession>
<dbReference type="EMBL" id="L06254">
    <property type="protein sequence ID" value="AAA71911.1"/>
    <property type="molecule type" value="Unassigned_DNA"/>
</dbReference>
<dbReference type="PIR" id="E36914">
    <property type="entry name" value="E36914"/>
</dbReference>
<dbReference type="RefSeq" id="WP_013066306.1">
    <property type="nucleotide sequence ID" value="NZ_VIBE01000004.1"/>
</dbReference>
<dbReference type="SMR" id="Q08383"/>
<dbReference type="GeneID" id="31489513"/>
<dbReference type="OMA" id="DTGHKAV"/>
<dbReference type="GO" id="GO:0042597">
    <property type="term" value="C:periplasmic space"/>
    <property type="evidence" value="ECO:0007669"/>
    <property type="project" value="UniProtKB-SubCell"/>
</dbReference>
<dbReference type="GO" id="GO:0046872">
    <property type="term" value="F:metal ion binding"/>
    <property type="evidence" value="ECO:0007669"/>
    <property type="project" value="UniProtKB-KW"/>
</dbReference>
<dbReference type="GO" id="GO:0030973">
    <property type="term" value="F:molybdate ion binding"/>
    <property type="evidence" value="ECO:0000250"/>
    <property type="project" value="UniProtKB"/>
</dbReference>
<dbReference type="GO" id="GO:0015689">
    <property type="term" value="P:molybdate ion transport"/>
    <property type="evidence" value="ECO:0007669"/>
    <property type="project" value="InterPro"/>
</dbReference>
<dbReference type="CDD" id="cd13539">
    <property type="entry name" value="PBP2_AvModA"/>
    <property type="match status" value="1"/>
</dbReference>
<dbReference type="FunFam" id="3.40.190.10:FF:000035">
    <property type="entry name" value="Molybdate ABC transporter substrate-binding protein"/>
    <property type="match status" value="1"/>
</dbReference>
<dbReference type="Gene3D" id="3.40.190.10">
    <property type="entry name" value="Periplasmic binding protein-like II"/>
    <property type="match status" value="2"/>
</dbReference>
<dbReference type="InterPro" id="IPR044084">
    <property type="entry name" value="AvModA-like_subst-bd"/>
</dbReference>
<dbReference type="InterPro" id="IPR005950">
    <property type="entry name" value="ModA"/>
</dbReference>
<dbReference type="InterPro" id="IPR050682">
    <property type="entry name" value="ModA/WtpA"/>
</dbReference>
<dbReference type="NCBIfam" id="TIGR01256">
    <property type="entry name" value="modA"/>
    <property type="match status" value="1"/>
</dbReference>
<dbReference type="PANTHER" id="PTHR30632">
    <property type="entry name" value="MOLYBDATE-BINDING PERIPLASMIC PROTEIN"/>
    <property type="match status" value="1"/>
</dbReference>
<dbReference type="PANTHER" id="PTHR30632:SF14">
    <property type="entry name" value="TUNGSTATE_MOLYBDATE_CHROMATE-BINDING PROTEIN MODA"/>
    <property type="match status" value="1"/>
</dbReference>
<dbReference type="Pfam" id="PF13531">
    <property type="entry name" value="SBP_bac_11"/>
    <property type="match status" value="1"/>
</dbReference>
<dbReference type="PIRSF" id="PIRSF004846">
    <property type="entry name" value="ModA"/>
    <property type="match status" value="1"/>
</dbReference>
<dbReference type="SUPFAM" id="SSF53850">
    <property type="entry name" value="Periplasmic binding protein-like II"/>
    <property type="match status" value="1"/>
</dbReference>
<name>MODA_RHOCA</name>
<feature type="signal peptide" evidence="3">
    <location>
        <begin position="1"/>
        <end position="27"/>
    </location>
</feature>
<feature type="chain" id="PRO_0000031829" description="Molybdate-binding protein ModA">
    <location>
        <begin position="28"/>
        <end position="252"/>
    </location>
</feature>
<feature type="binding site" evidence="2">
    <location>
        <position position="64"/>
    </location>
    <ligand>
        <name>molybdate</name>
        <dbReference type="ChEBI" id="CHEBI:36264"/>
    </ligand>
</feature>
<feature type="binding site" evidence="2">
    <location>
        <position position="171"/>
    </location>
    <ligand>
        <name>molybdate</name>
        <dbReference type="ChEBI" id="CHEBI:36264"/>
    </ligand>
</feature>
<feature type="binding site" evidence="2">
    <location>
        <position position="190"/>
    </location>
    <ligand>
        <name>molybdate</name>
        <dbReference type="ChEBI" id="CHEBI:36264"/>
    </ligand>
</feature>
<evidence type="ECO:0000250" key="1"/>
<evidence type="ECO:0000250" key="2">
    <source>
        <dbReference type="UniProtKB" id="P37329"/>
    </source>
</evidence>
<evidence type="ECO:0000255" key="3"/>
<evidence type="ECO:0000305" key="4"/>
<comment type="function">
    <text>Involved in the transport of molybdenum into the cell.</text>
</comment>
<comment type="subunit">
    <text evidence="4">The complex is composed of two ATP-binding proteins (ModC), two transmembrane proteins (ModB) and a solute-binding protein (ModA).</text>
</comment>
<comment type="subcellular location">
    <subcellularLocation>
        <location evidence="1">Periplasm</location>
    </subcellularLocation>
</comment>
<comment type="similarity">
    <text evidence="4">Belongs to the bacterial solute-binding protein ModA family.</text>
</comment>
<keyword id="KW-0479">Metal-binding</keyword>
<keyword id="KW-0500">Molybdenum</keyword>
<keyword id="KW-0574">Periplasm</keyword>
<keyword id="KW-0732">Signal</keyword>
<keyword id="KW-0813">Transport</keyword>
<keyword id="KW-0826">Tungsten</keyword>
<gene>
    <name type="primary">modA</name>
    <name type="synonym">molP</name>
</gene>
<sequence length="252" mass="26620">MTQFPQTLRAGATALALVMGLALPAAAGEVIAAVAANFTEPAKEIGALFTEKTGHTVTYAFGPSGQFYTQITQGAPFEVFLSADASRPKKAVEEGYAVPGSDFTYAVGKLVLWSADPARVDDKGAVLKTDLEHVAIADPKSAPYGAAAIEVMQKLGVYETLEPKLVTGKSISQAYEFAATGNAPVGFVAYSQVIGKEGGSSWMVPQDLYKPIKQDAVLLKTGAEDAAAKAYLDFLKTPEALEIIRKYGYVTE</sequence>
<proteinExistence type="inferred from homology"/>
<protein>
    <recommendedName>
        <fullName evidence="4">Molybdate-binding protein ModA</fullName>
    </recommendedName>
    <alternativeName>
        <fullName evidence="4">Molybdate/tungstate-binding protein ModA</fullName>
    </alternativeName>
</protein>
<reference key="1">
    <citation type="journal article" date="1993" name="J. Bacteriol.">
        <title>Characterization of Rhodobacter capsulatus genes encoding a molybdenum transport system and putative molybdenum-pterin-binding proteins.</title>
        <authorList>
            <person name="Wang G."/>
            <person name="Angermueller S."/>
            <person name="Klipp W."/>
        </authorList>
    </citation>
    <scope>NUCLEOTIDE SEQUENCE [GENOMIC DNA]</scope>
    <source>
        <strain>ATCC 33303 / B10</strain>
    </source>
</reference>
<organism>
    <name type="scientific">Rhodobacter capsulatus</name>
    <name type="common">Rhodopseudomonas capsulata</name>
    <dbReference type="NCBI Taxonomy" id="1061"/>
    <lineage>
        <taxon>Bacteria</taxon>
        <taxon>Pseudomonadati</taxon>
        <taxon>Pseudomonadota</taxon>
        <taxon>Alphaproteobacteria</taxon>
        <taxon>Rhodobacterales</taxon>
        <taxon>Rhodobacter group</taxon>
        <taxon>Rhodobacter</taxon>
    </lineage>
</organism>